<sequence>MGWKMASPTDGTDLEASLLSFEKLDRASPDLWPEQLPGVAEFAASFKSPITSSPPKWMAEIERDDIDMLKELGSLTTANLMEKVRGLQNLAYQLGLDESREMTRGKFLNILEKPKK</sequence>
<protein>
    <recommendedName>
        <fullName>Protein lin-52 homolog</fullName>
    </recommendedName>
</protein>
<accession>Q8CD94</accession>
<dbReference type="EMBL" id="AK030923">
    <property type="protein sequence ID" value="BAC27185.1"/>
    <property type="molecule type" value="mRNA"/>
</dbReference>
<dbReference type="EMBL" id="BC120496">
    <property type="protein sequence ID" value="AAI20497.1"/>
    <property type="molecule type" value="mRNA"/>
</dbReference>
<dbReference type="RefSeq" id="NP_776117.1">
    <property type="nucleotide sequence ID" value="NM_173756.4"/>
</dbReference>
<dbReference type="SMR" id="Q8CD94"/>
<dbReference type="FunCoup" id="Q8CD94">
    <property type="interactions" value="76"/>
</dbReference>
<dbReference type="STRING" id="10090.ENSMUSP00000133045"/>
<dbReference type="iPTMnet" id="Q8CD94"/>
<dbReference type="PhosphoSitePlus" id="Q8CD94"/>
<dbReference type="jPOST" id="Q8CD94"/>
<dbReference type="PaxDb" id="10090-ENSMUSP00000133045"/>
<dbReference type="ProteomicsDB" id="291953"/>
<dbReference type="Pumba" id="Q8CD94"/>
<dbReference type="Antibodypedia" id="8">
    <property type="antibodies" value="65 antibodies from 14 providers"/>
</dbReference>
<dbReference type="DNASU" id="217708"/>
<dbReference type="GeneID" id="217708"/>
<dbReference type="KEGG" id="mmu:217708"/>
<dbReference type="UCSC" id="uc007ofl.1">
    <property type="organism name" value="mouse"/>
</dbReference>
<dbReference type="AGR" id="MGI:3045391"/>
<dbReference type="CTD" id="91750"/>
<dbReference type="MGI" id="MGI:3045391">
    <property type="gene designation" value="Lin52"/>
</dbReference>
<dbReference type="VEuPathDB" id="HostDB:ENSMUSG00000085793"/>
<dbReference type="eggNOG" id="KOG4402">
    <property type="taxonomic scope" value="Eukaryota"/>
</dbReference>
<dbReference type="HOGENOM" id="CLU_143062_1_0_1"/>
<dbReference type="InParanoid" id="Q8CD94"/>
<dbReference type="OMA" id="NVQNTAY"/>
<dbReference type="PhylomeDB" id="Q8CD94"/>
<dbReference type="TreeFam" id="TF320091"/>
<dbReference type="Reactome" id="R-MMU-1538133">
    <property type="pathway name" value="G0 and Early G1"/>
</dbReference>
<dbReference type="BioGRID-ORCS" id="217708">
    <property type="hits" value="22 hits in 78 CRISPR screens"/>
</dbReference>
<dbReference type="ChiTaRS" id="Lin52">
    <property type="organism name" value="mouse"/>
</dbReference>
<dbReference type="PRO" id="PR:Q8CD94"/>
<dbReference type="Proteomes" id="UP000000589">
    <property type="component" value="Chromosome 12"/>
</dbReference>
<dbReference type="RNAct" id="Q8CD94">
    <property type="molecule type" value="protein"/>
</dbReference>
<dbReference type="Bgee" id="ENSMUSG00000085793">
    <property type="expression patterns" value="Expressed in spermatocyte and 221 other cell types or tissues"/>
</dbReference>
<dbReference type="ExpressionAtlas" id="Q8CD94">
    <property type="expression patterns" value="baseline and differential"/>
</dbReference>
<dbReference type="GO" id="GO:0070176">
    <property type="term" value="C:DRM complex"/>
    <property type="evidence" value="ECO:0007669"/>
    <property type="project" value="InterPro"/>
</dbReference>
<dbReference type="GO" id="GO:0006355">
    <property type="term" value="P:regulation of DNA-templated transcription"/>
    <property type="evidence" value="ECO:0007669"/>
    <property type="project" value="InterPro"/>
</dbReference>
<dbReference type="InterPro" id="IPR018737">
    <property type="entry name" value="DREAM_LIN52"/>
</dbReference>
<dbReference type="PANTHER" id="PTHR31489">
    <property type="entry name" value="LIN52 FAMILY MEMBER"/>
    <property type="match status" value="1"/>
</dbReference>
<dbReference type="PANTHER" id="PTHR31489:SF2">
    <property type="entry name" value="PROTEIN LIN-52 HOMOLOG"/>
    <property type="match status" value="1"/>
</dbReference>
<dbReference type="Pfam" id="PF10044">
    <property type="entry name" value="LIN52"/>
    <property type="match status" value="1"/>
</dbReference>
<reference key="1">
    <citation type="journal article" date="2005" name="Science">
        <title>The transcriptional landscape of the mammalian genome.</title>
        <authorList>
            <person name="Carninci P."/>
            <person name="Kasukawa T."/>
            <person name="Katayama S."/>
            <person name="Gough J."/>
            <person name="Frith M.C."/>
            <person name="Maeda N."/>
            <person name="Oyama R."/>
            <person name="Ravasi T."/>
            <person name="Lenhard B."/>
            <person name="Wells C."/>
            <person name="Kodzius R."/>
            <person name="Shimokawa K."/>
            <person name="Bajic V.B."/>
            <person name="Brenner S.E."/>
            <person name="Batalov S."/>
            <person name="Forrest A.R."/>
            <person name="Zavolan M."/>
            <person name="Davis M.J."/>
            <person name="Wilming L.G."/>
            <person name="Aidinis V."/>
            <person name="Allen J.E."/>
            <person name="Ambesi-Impiombato A."/>
            <person name="Apweiler R."/>
            <person name="Aturaliya R.N."/>
            <person name="Bailey T.L."/>
            <person name="Bansal M."/>
            <person name="Baxter L."/>
            <person name="Beisel K.W."/>
            <person name="Bersano T."/>
            <person name="Bono H."/>
            <person name="Chalk A.M."/>
            <person name="Chiu K.P."/>
            <person name="Choudhary V."/>
            <person name="Christoffels A."/>
            <person name="Clutterbuck D.R."/>
            <person name="Crowe M.L."/>
            <person name="Dalla E."/>
            <person name="Dalrymple B.P."/>
            <person name="de Bono B."/>
            <person name="Della Gatta G."/>
            <person name="di Bernardo D."/>
            <person name="Down T."/>
            <person name="Engstrom P."/>
            <person name="Fagiolini M."/>
            <person name="Faulkner G."/>
            <person name="Fletcher C.F."/>
            <person name="Fukushima T."/>
            <person name="Furuno M."/>
            <person name="Futaki S."/>
            <person name="Gariboldi M."/>
            <person name="Georgii-Hemming P."/>
            <person name="Gingeras T.R."/>
            <person name="Gojobori T."/>
            <person name="Green R.E."/>
            <person name="Gustincich S."/>
            <person name="Harbers M."/>
            <person name="Hayashi Y."/>
            <person name="Hensch T.K."/>
            <person name="Hirokawa N."/>
            <person name="Hill D."/>
            <person name="Huminiecki L."/>
            <person name="Iacono M."/>
            <person name="Ikeo K."/>
            <person name="Iwama A."/>
            <person name="Ishikawa T."/>
            <person name="Jakt M."/>
            <person name="Kanapin A."/>
            <person name="Katoh M."/>
            <person name="Kawasawa Y."/>
            <person name="Kelso J."/>
            <person name="Kitamura H."/>
            <person name="Kitano H."/>
            <person name="Kollias G."/>
            <person name="Krishnan S.P."/>
            <person name="Kruger A."/>
            <person name="Kummerfeld S.K."/>
            <person name="Kurochkin I.V."/>
            <person name="Lareau L.F."/>
            <person name="Lazarevic D."/>
            <person name="Lipovich L."/>
            <person name="Liu J."/>
            <person name="Liuni S."/>
            <person name="McWilliam S."/>
            <person name="Madan Babu M."/>
            <person name="Madera M."/>
            <person name="Marchionni L."/>
            <person name="Matsuda H."/>
            <person name="Matsuzawa S."/>
            <person name="Miki H."/>
            <person name="Mignone F."/>
            <person name="Miyake S."/>
            <person name="Morris K."/>
            <person name="Mottagui-Tabar S."/>
            <person name="Mulder N."/>
            <person name="Nakano N."/>
            <person name="Nakauchi H."/>
            <person name="Ng P."/>
            <person name="Nilsson R."/>
            <person name="Nishiguchi S."/>
            <person name="Nishikawa S."/>
            <person name="Nori F."/>
            <person name="Ohara O."/>
            <person name="Okazaki Y."/>
            <person name="Orlando V."/>
            <person name="Pang K.C."/>
            <person name="Pavan W.J."/>
            <person name="Pavesi G."/>
            <person name="Pesole G."/>
            <person name="Petrovsky N."/>
            <person name="Piazza S."/>
            <person name="Reed J."/>
            <person name="Reid J.F."/>
            <person name="Ring B.Z."/>
            <person name="Ringwald M."/>
            <person name="Rost B."/>
            <person name="Ruan Y."/>
            <person name="Salzberg S.L."/>
            <person name="Sandelin A."/>
            <person name="Schneider C."/>
            <person name="Schoenbach C."/>
            <person name="Sekiguchi K."/>
            <person name="Semple C.A."/>
            <person name="Seno S."/>
            <person name="Sessa L."/>
            <person name="Sheng Y."/>
            <person name="Shibata Y."/>
            <person name="Shimada H."/>
            <person name="Shimada K."/>
            <person name="Silva D."/>
            <person name="Sinclair B."/>
            <person name="Sperling S."/>
            <person name="Stupka E."/>
            <person name="Sugiura K."/>
            <person name="Sultana R."/>
            <person name="Takenaka Y."/>
            <person name="Taki K."/>
            <person name="Tammoja K."/>
            <person name="Tan S.L."/>
            <person name="Tang S."/>
            <person name="Taylor M.S."/>
            <person name="Tegner J."/>
            <person name="Teichmann S.A."/>
            <person name="Ueda H.R."/>
            <person name="van Nimwegen E."/>
            <person name="Verardo R."/>
            <person name="Wei C.L."/>
            <person name="Yagi K."/>
            <person name="Yamanishi H."/>
            <person name="Zabarovsky E."/>
            <person name="Zhu S."/>
            <person name="Zimmer A."/>
            <person name="Hide W."/>
            <person name="Bult C."/>
            <person name="Grimmond S.M."/>
            <person name="Teasdale R.D."/>
            <person name="Liu E.T."/>
            <person name="Brusic V."/>
            <person name="Quackenbush J."/>
            <person name="Wahlestedt C."/>
            <person name="Mattick J.S."/>
            <person name="Hume D.A."/>
            <person name="Kai C."/>
            <person name="Sasaki D."/>
            <person name="Tomaru Y."/>
            <person name="Fukuda S."/>
            <person name="Kanamori-Katayama M."/>
            <person name="Suzuki M."/>
            <person name="Aoki J."/>
            <person name="Arakawa T."/>
            <person name="Iida J."/>
            <person name="Imamura K."/>
            <person name="Itoh M."/>
            <person name="Kato T."/>
            <person name="Kawaji H."/>
            <person name="Kawagashira N."/>
            <person name="Kawashima T."/>
            <person name="Kojima M."/>
            <person name="Kondo S."/>
            <person name="Konno H."/>
            <person name="Nakano K."/>
            <person name="Ninomiya N."/>
            <person name="Nishio T."/>
            <person name="Okada M."/>
            <person name="Plessy C."/>
            <person name="Shibata K."/>
            <person name="Shiraki T."/>
            <person name="Suzuki S."/>
            <person name="Tagami M."/>
            <person name="Waki K."/>
            <person name="Watahiki A."/>
            <person name="Okamura-Oho Y."/>
            <person name="Suzuki H."/>
            <person name="Kawai J."/>
            <person name="Hayashizaki Y."/>
        </authorList>
    </citation>
    <scope>NUCLEOTIDE SEQUENCE [LARGE SCALE MRNA]</scope>
    <source>
        <strain>C57BL/6J</strain>
        <tissue>Thymus</tissue>
    </source>
</reference>
<reference key="2">
    <citation type="journal article" date="2004" name="Genome Res.">
        <title>The status, quality, and expansion of the NIH full-length cDNA project: the Mammalian Gene Collection (MGC).</title>
        <authorList>
            <consortium name="The MGC Project Team"/>
        </authorList>
    </citation>
    <scope>NUCLEOTIDE SEQUENCE [LARGE SCALE MRNA]</scope>
    <source>
        <tissue>Brain</tissue>
    </source>
</reference>
<reference key="3">
    <citation type="journal article" date="2010" name="Cell">
        <title>A tissue-specific atlas of mouse protein phosphorylation and expression.</title>
        <authorList>
            <person name="Huttlin E.L."/>
            <person name="Jedrychowski M.P."/>
            <person name="Elias J.E."/>
            <person name="Goswami T."/>
            <person name="Rad R."/>
            <person name="Beausoleil S.A."/>
            <person name="Villen J."/>
            <person name="Haas W."/>
            <person name="Sowa M.E."/>
            <person name="Gygi S.P."/>
        </authorList>
    </citation>
    <scope>PHOSPHORYLATION [LARGE SCALE ANALYSIS] AT SER-28</scope>
    <scope>IDENTIFICATION BY MASS SPECTROMETRY [LARGE SCALE ANALYSIS]</scope>
    <source>
        <tissue>Spleen</tissue>
        <tissue>Testis</tissue>
    </source>
</reference>
<name>LIN52_MOUSE</name>
<keyword id="KW-0597">Phosphoprotein</keyword>
<keyword id="KW-1185">Reference proteome</keyword>
<organism>
    <name type="scientific">Mus musculus</name>
    <name type="common">Mouse</name>
    <dbReference type="NCBI Taxonomy" id="10090"/>
    <lineage>
        <taxon>Eukaryota</taxon>
        <taxon>Metazoa</taxon>
        <taxon>Chordata</taxon>
        <taxon>Craniata</taxon>
        <taxon>Vertebrata</taxon>
        <taxon>Euteleostomi</taxon>
        <taxon>Mammalia</taxon>
        <taxon>Eutheria</taxon>
        <taxon>Euarchontoglires</taxon>
        <taxon>Glires</taxon>
        <taxon>Rodentia</taxon>
        <taxon>Myomorpha</taxon>
        <taxon>Muroidea</taxon>
        <taxon>Muridae</taxon>
        <taxon>Murinae</taxon>
        <taxon>Mus</taxon>
        <taxon>Mus</taxon>
    </lineage>
</organism>
<comment type="subunit">
    <text evidence="1">Component of the DREAM complex (also named LINC complex) at least composed of E2F4, E2F5, LIN9, LIN37, LIN52, LIN54, MYBL1, MYBL2, RBL1, RBL2, RBBP4, TFDP1 and TFDP2. The complex exists in quiescent cells where it represses cell cycle-dependent genes. It dissociates in S phase when LIN9, LIN37, LIN52 and LIN54 form a subcomplex that binds to MYBL2 (By similarity).</text>
</comment>
<comment type="similarity">
    <text evidence="3">Belongs to the lin-52 family.</text>
</comment>
<proteinExistence type="evidence at protein level"/>
<evidence type="ECO:0000250" key="1"/>
<evidence type="ECO:0000250" key="2">
    <source>
        <dbReference type="UniProtKB" id="Q52LA3"/>
    </source>
</evidence>
<evidence type="ECO:0000305" key="3"/>
<evidence type="ECO:0007744" key="4">
    <source>
    </source>
</evidence>
<feature type="chain" id="PRO_0000252155" description="Protein lin-52 homolog">
    <location>
        <begin position="1"/>
        <end position="116"/>
    </location>
</feature>
<feature type="modified residue" description="Phosphoserine" evidence="4">
    <location>
        <position position="28"/>
    </location>
</feature>
<feature type="modified residue" description="Phosphoserine" evidence="2">
    <location>
        <position position="53"/>
    </location>
</feature>
<gene>
    <name type="primary">Lin52</name>
</gene>